<reference key="1">
    <citation type="journal article" date="2011" name="Stand. Genomic Sci.">
        <title>Complete genome sequence of Parvibaculum lavamentivorans type strain (DS-1(T)).</title>
        <authorList>
            <person name="Schleheck D."/>
            <person name="Weiss M."/>
            <person name="Pitluck S."/>
            <person name="Bruce D."/>
            <person name="Land M.L."/>
            <person name="Han S."/>
            <person name="Saunders E."/>
            <person name="Tapia R."/>
            <person name="Detter C."/>
            <person name="Brettin T."/>
            <person name="Han J."/>
            <person name="Woyke T."/>
            <person name="Goodwin L."/>
            <person name="Pennacchio L."/>
            <person name="Nolan M."/>
            <person name="Cook A.M."/>
            <person name="Kjelleberg S."/>
            <person name="Thomas T."/>
        </authorList>
    </citation>
    <scope>NUCLEOTIDE SEQUENCE [LARGE SCALE GENOMIC DNA]</scope>
    <source>
        <strain>DS-1 / DSM 13023 / NCIMB 13966</strain>
    </source>
</reference>
<gene>
    <name evidence="1" type="primary">rpsQ</name>
    <name type="ordered locus">Plav_2745</name>
</gene>
<dbReference type="EMBL" id="CP000774">
    <property type="protein sequence ID" value="ABS64353.1"/>
    <property type="molecule type" value="Genomic_DNA"/>
</dbReference>
<dbReference type="RefSeq" id="WP_012111667.1">
    <property type="nucleotide sequence ID" value="NC_009719.1"/>
</dbReference>
<dbReference type="SMR" id="A7HWS0"/>
<dbReference type="STRING" id="402881.Plav_2745"/>
<dbReference type="KEGG" id="pla:Plav_2745"/>
<dbReference type="eggNOG" id="COG0186">
    <property type="taxonomic scope" value="Bacteria"/>
</dbReference>
<dbReference type="HOGENOM" id="CLU_073626_1_1_5"/>
<dbReference type="OrthoDB" id="9811714at2"/>
<dbReference type="Proteomes" id="UP000006377">
    <property type="component" value="Chromosome"/>
</dbReference>
<dbReference type="GO" id="GO:0022627">
    <property type="term" value="C:cytosolic small ribosomal subunit"/>
    <property type="evidence" value="ECO:0007669"/>
    <property type="project" value="TreeGrafter"/>
</dbReference>
<dbReference type="GO" id="GO:0019843">
    <property type="term" value="F:rRNA binding"/>
    <property type="evidence" value="ECO:0007669"/>
    <property type="project" value="UniProtKB-UniRule"/>
</dbReference>
<dbReference type="GO" id="GO:0003735">
    <property type="term" value="F:structural constituent of ribosome"/>
    <property type="evidence" value="ECO:0007669"/>
    <property type="project" value="InterPro"/>
</dbReference>
<dbReference type="GO" id="GO:0006412">
    <property type="term" value="P:translation"/>
    <property type="evidence" value="ECO:0007669"/>
    <property type="project" value="UniProtKB-UniRule"/>
</dbReference>
<dbReference type="CDD" id="cd00364">
    <property type="entry name" value="Ribosomal_uS17"/>
    <property type="match status" value="1"/>
</dbReference>
<dbReference type="Gene3D" id="2.40.50.140">
    <property type="entry name" value="Nucleic acid-binding proteins"/>
    <property type="match status" value="1"/>
</dbReference>
<dbReference type="HAMAP" id="MF_01345_B">
    <property type="entry name" value="Ribosomal_uS17_B"/>
    <property type="match status" value="1"/>
</dbReference>
<dbReference type="InterPro" id="IPR012340">
    <property type="entry name" value="NA-bd_OB-fold"/>
</dbReference>
<dbReference type="InterPro" id="IPR000266">
    <property type="entry name" value="Ribosomal_uS17"/>
</dbReference>
<dbReference type="InterPro" id="IPR019984">
    <property type="entry name" value="Ribosomal_uS17_bact/chlr"/>
</dbReference>
<dbReference type="InterPro" id="IPR019979">
    <property type="entry name" value="Ribosomal_uS17_CS"/>
</dbReference>
<dbReference type="NCBIfam" id="NF004123">
    <property type="entry name" value="PRK05610.1"/>
    <property type="match status" value="1"/>
</dbReference>
<dbReference type="NCBIfam" id="TIGR03635">
    <property type="entry name" value="uS17_bact"/>
    <property type="match status" value="1"/>
</dbReference>
<dbReference type="PANTHER" id="PTHR10744">
    <property type="entry name" value="40S RIBOSOMAL PROTEIN S11 FAMILY MEMBER"/>
    <property type="match status" value="1"/>
</dbReference>
<dbReference type="PANTHER" id="PTHR10744:SF1">
    <property type="entry name" value="SMALL RIBOSOMAL SUBUNIT PROTEIN US17M"/>
    <property type="match status" value="1"/>
</dbReference>
<dbReference type="Pfam" id="PF00366">
    <property type="entry name" value="Ribosomal_S17"/>
    <property type="match status" value="1"/>
</dbReference>
<dbReference type="PRINTS" id="PR00973">
    <property type="entry name" value="RIBOSOMALS17"/>
</dbReference>
<dbReference type="SUPFAM" id="SSF50249">
    <property type="entry name" value="Nucleic acid-binding proteins"/>
    <property type="match status" value="1"/>
</dbReference>
<dbReference type="PROSITE" id="PS00056">
    <property type="entry name" value="RIBOSOMAL_S17"/>
    <property type="match status" value="1"/>
</dbReference>
<protein>
    <recommendedName>
        <fullName evidence="1">Small ribosomal subunit protein uS17</fullName>
    </recommendedName>
    <alternativeName>
        <fullName evidence="2">30S ribosomal protein S17</fullName>
    </alternativeName>
</protein>
<accession>A7HWS0</accession>
<proteinExistence type="inferred from homology"/>
<organism>
    <name type="scientific">Parvibaculum lavamentivorans (strain DS-1 / DSM 13023 / NCIMB 13966)</name>
    <dbReference type="NCBI Taxonomy" id="402881"/>
    <lineage>
        <taxon>Bacteria</taxon>
        <taxon>Pseudomonadati</taxon>
        <taxon>Pseudomonadota</taxon>
        <taxon>Alphaproteobacteria</taxon>
        <taxon>Hyphomicrobiales</taxon>
        <taxon>Parvibaculaceae</taxon>
        <taxon>Parvibaculum</taxon>
    </lineage>
</organism>
<evidence type="ECO:0000255" key="1">
    <source>
        <dbReference type="HAMAP-Rule" id="MF_01345"/>
    </source>
</evidence>
<evidence type="ECO:0000305" key="2"/>
<name>RS17_PARL1</name>
<feature type="chain" id="PRO_1000073345" description="Small ribosomal subunit protein uS17">
    <location>
        <begin position="1"/>
        <end position="78"/>
    </location>
</feature>
<sequence length="78" mass="9129">MPKRILQGVVVSDKNEKTIVVNVERRFQDPLLKKIVRRSKKYHAHDENKSAKVGDIVKIRECKPVSKLKKWEVFTDEA</sequence>
<keyword id="KW-1185">Reference proteome</keyword>
<keyword id="KW-0687">Ribonucleoprotein</keyword>
<keyword id="KW-0689">Ribosomal protein</keyword>
<keyword id="KW-0694">RNA-binding</keyword>
<keyword id="KW-0699">rRNA-binding</keyword>
<comment type="function">
    <text evidence="1">One of the primary rRNA binding proteins, it binds specifically to the 5'-end of 16S ribosomal RNA.</text>
</comment>
<comment type="subunit">
    <text evidence="1">Part of the 30S ribosomal subunit.</text>
</comment>
<comment type="similarity">
    <text evidence="1">Belongs to the universal ribosomal protein uS17 family.</text>
</comment>